<feature type="chain" id="PRO_1000101287" description="Glycine--tRNA ligase beta subunit">
    <location>
        <begin position="1"/>
        <end position="700"/>
    </location>
</feature>
<evidence type="ECO:0000255" key="1">
    <source>
        <dbReference type="HAMAP-Rule" id="MF_00255"/>
    </source>
</evidence>
<accession>A6SV18</accession>
<keyword id="KW-0030">Aminoacyl-tRNA synthetase</keyword>
<keyword id="KW-0067">ATP-binding</keyword>
<keyword id="KW-0963">Cytoplasm</keyword>
<keyword id="KW-0436">Ligase</keyword>
<keyword id="KW-0547">Nucleotide-binding</keyword>
<keyword id="KW-0648">Protein biosynthesis</keyword>
<organism>
    <name type="scientific">Janthinobacterium sp. (strain Marseille)</name>
    <name type="common">Minibacterium massiliensis</name>
    <dbReference type="NCBI Taxonomy" id="375286"/>
    <lineage>
        <taxon>Bacteria</taxon>
        <taxon>Pseudomonadati</taxon>
        <taxon>Pseudomonadota</taxon>
        <taxon>Betaproteobacteria</taxon>
        <taxon>Burkholderiales</taxon>
        <taxon>Oxalobacteraceae</taxon>
        <taxon>Janthinobacterium</taxon>
    </lineage>
</organism>
<sequence length="700" mass="74908">MSTKNLLLELFVEELPPKALKKIGEAFAQTLQASLQTQGLLSADSVLTAFASPRRLGVHLTKVLEQADDKTVMQKLMPAAVGIGADGKATPALLKKLAALGADESAVAGLKRESDGKAEVLFFNSVVTGVMLTDGLQKALEETLGKLPIPKVMAYQLADGWETVNFVRPAHGLVALYGADVLNISVLGLHAGNTTHGHRFEAGIDPVYIRDADSYAKQIATEGAVIASFAERRAEIVRQLASAAAEAGSNLTPIEDEALLDEVTGLVERPNVLIGQFEEAFLEVPQECLILTMKANQKYFPLLDSKGGLSNKFLIVSNIRPADASTVIGGNERVVRPRLADAKFFFDQDRKKTLMSRVAGLDKVVYHNKLGTQGERIARVRAIAQAIAGKLGVDAQQADTAAQLAKADLLTDMVGEFPELQGIMGRYYALHDGLPAAVADAIEDHYKPRFAGDELPRNPVGMVVALADKLETLVGLFSIGQVPTGDKDPFALRRHALGIIRMLIEGKLDIGINDLITAAEKPFNGLSAEHRSALLNFIFDRLANALREQGYSAQEIDAVLALQPQRLADVAERLAAVRAFAALPEAASLAAANKRVGNILKKVEGTVAAQVDTALLKEPAEIALNQTLTTVKPQAEAAFARGDYTASLQALAALRNPVDAFFDGVMVNAEDIALRNNRQGLLATLHQAMNQVADISKLAA</sequence>
<protein>
    <recommendedName>
        <fullName evidence="1">Glycine--tRNA ligase beta subunit</fullName>
        <ecNumber evidence="1">6.1.1.14</ecNumber>
    </recommendedName>
    <alternativeName>
        <fullName evidence="1">Glycyl-tRNA synthetase beta subunit</fullName>
        <shortName evidence="1">GlyRS</shortName>
    </alternativeName>
</protein>
<dbReference type="EC" id="6.1.1.14" evidence="1"/>
<dbReference type="EMBL" id="CP000269">
    <property type="protein sequence ID" value="ABR89000.1"/>
    <property type="molecule type" value="Genomic_DNA"/>
</dbReference>
<dbReference type="RefSeq" id="WP_012078290.1">
    <property type="nucleotide sequence ID" value="NC_009659.1"/>
</dbReference>
<dbReference type="SMR" id="A6SV18"/>
<dbReference type="STRING" id="375286.mma_0425"/>
<dbReference type="KEGG" id="mms:mma_0425"/>
<dbReference type="eggNOG" id="COG0751">
    <property type="taxonomic scope" value="Bacteria"/>
</dbReference>
<dbReference type="HOGENOM" id="CLU_007220_2_2_4"/>
<dbReference type="OrthoDB" id="9775440at2"/>
<dbReference type="Proteomes" id="UP000006388">
    <property type="component" value="Chromosome"/>
</dbReference>
<dbReference type="GO" id="GO:0005829">
    <property type="term" value="C:cytosol"/>
    <property type="evidence" value="ECO:0007669"/>
    <property type="project" value="TreeGrafter"/>
</dbReference>
<dbReference type="GO" id="GO:0004814">
    <property type="term" value="F:arginine-tRNA ligase activity"/>
    <property type="evidence" value="ECO:0007669"/>
    <property type="project" value="InterPro"/>
</dbReference>
<dbReference type="GO" id="GO:0005524">
    <property type="term" value="F:ATP binding"/>
    <property type="evidence" value="ECO:0007669"/>
    <property type="project" value="UniProtKB-UniRule"/>
</dbReference>
<dbReference type="GO" id="GO:0004820">
    <property type="term" value="F:glycine-tRNA ligase activity"/>
    <property type="evidence" value="ECO:0007669"/>
    <property type="project" value="UniProtKB-UniRule"/>
</dbReference>
<dbReference type="GO" id="GO:0006420">
    <property type="term" value="P:arginyl-tRNA aminoacylation"/>
    <property type="evidence" value="ECO:0007669"/>
    <property type="project" value="InterPro"/>
</dbReference>
<dbReference type="GO" id="GO:0006426">
    <property type="term" value="P:glycyl-tRNA aminoacylation"/>
    <property type="evidence" value="ECO:0007669"/>
    <property type="project" value="UniProtKB-UniRule"/>
</dbReference>
<dbReference type="HAMAP" id="MF_00255">
    <property type="entry name" value="Gly_tRNA_synth_beta"/>
    <property type="match status" value="1"/>
</dbReference>
<dbReference type="InterPro" id="IPR008909">
    <property type="entry name" value="DALR_anticod-bd"/>
</dbReference>
<dbReference type="InterPro" id="IPR015944">
    <property type="entry name" value="Gly-tRNA-synth_bsu"/>
</dbReference>
<dbReference type="InterPro" id="IPR006194">
    <property type="entry name" value="Gly-tRNA-synth_heterodimer"/>
</dbReference>
<dbReference type="NCBIfam" id="TIGR00211">
    <property type="entry name" value="glyS"/>
    <property type="match status" value="1"/>
</dbReference>
<dbReference type="PANTHER" id="PTHR30075:SF2">
    <property type="entry name" value="GLYCINE--TRNA LIGASE, CHLOROPLASTIC_MITOCHONDRIAL 2"/>
    <property type="match status" value="1"/>
</dbReference>
<dbReference type="PANTHER" id="PTHR30075">
    <property type="entry name" value="GLYCYL-TRNA SYNTHETASE"/>
    <property type="match status" value="1"/>
</dbReference>
<dbReference type="Pfam" id="PF05746">
    <property type="entry name" value="DALR_1"/>
    <property type="match status" value="1"/>
</dbReference>
<dbReference type="Pfam" id="PF02092">
    <property type="entry name" value="tRNA_synt_2f"/>
    <property type="match status" value="1"/>
</dbReference>
<dbReference type="PRINTS" id="PR01045">
    <property type="entry name" value="TRNASYNTHGB"/>
</dbReference>
<dbReference type="SUPFAM" id="SSF109604">
    <property type="entry name" value="HD-domain/PDEase-like"/>
    <property type="match status" value="1"/>
</dbReference>
<dbReference type="PROSITE" id="PS50861">
    <property type="entry name" value="AA_TRNA_LIGASE_II_GLYAB"/>
    <property type="match status" value="1"/>
</dbReference>
<comment type="catalytic activity">
    <reaction evidence="1">
        <text>tRNA(Gly) + glycine + ATP = glycyl-tRNA(Gly) + AMP + diphosphate</text>
        <dbReference type="Rhea" id="RHEA:16013"/>
        <dbReference type="Rhea" id="RHEA-COMP:9664"/>
        <dbReference type="Rhea" id="RHEA-COMP:9683"/>
        <dbReference type="ChEBI" id="CHEBI:30616"/>
        <dbReference type="ChEBI" id="CHEBI:33019"/>
        <dbReference type="ChEBI" id="CHEBI:57305"/>
        <dbReference type="ChEBI" id="CHEBI:78442"/>
        <dbReference type="ChEBI" id="CHEBI:78522"/>
        <dbReference type="ChEBI" id="CHEBI:456215"/>
        <dbReference type="EC" id="6.1.1.14"/>
    </reaction>
</comment>
<comment type="subunit">
    <text evidence="1">Tetramer of two alpha and two beta subunits.</text>
</comment>
<comment type="subcellular location">
    <subcellularLocation>
        <location evidence="1">Cytoplasm</location>
    </subcellularLocation>
</comment>
<comment type="similarity">
    <text evidence="1">Belongs to the class-II aminoacyl-tRNA synthetase family.</text>
</comment>
<gene>
    <name evidence="1" type="primary">glyS</name>
    <name type="ordered locus">mma_0425</name>
</gene>
<reference key="1">
    <citation type="journal article" date="2007" name="PLoS Genet.">
        <title>Genome analysis of Minibacterium massiliensis highlights the convergent evolution of water-living bacteria.</title>
        <authorList>
            <person name="Audic S."/>
            <person name="Robert C."/>
            <person name="Campagna B."/>
            <person name="Parinello H."/>
            <person name="Claverie J.-M."/>
            <person name="Raoult D."/>
            <person name="Drancourt M."/>
        </authorList>
    </citation>
    <scope>NUCLEOTIDE SEQUENCE [LARGE SCALE GENOMIC DNA]</scope>
    <source>
        <strain>Marseille</strain>
    </source>
</reference>
<proteinExistence type="inferred from homology"/>
<name>SYGB_JANMA</name>